<protein>
    <recommendedName>
        <fullName evidence="1">UDP-3-O-acyl-N-acetylglucosamine deacetylase</fullName>
        <shortName evidence="1">UDP-3-O-acyl-GlcNAc deacetylase</shortName>
        <ecNumber evidence="1">3.5.1.108</ecNumber>
    </recommendedName>
    <alternativeName>
        <fullName evidence="1">UDP-3-O-[R-3-hydroxymyristoyl]-N-acetylglucosamine deacetylase</fullName>
    </alternativeName>
</protein>
<proteinExistence type="inferred from homology"/>
<sequence>MIRQRTLKEIVKTTGVGLHSGRKVTLTLRPAAANTGIIYRRTDVNPPVDFPADPASVRDTMLCTALVNDEGVRISTVEHLNAALAGMGIDNIIVEVDAPEIPIMDGSASPFVYLLQQAGIEMQNVPKRFIRIKKPVRFEDGDKWAEFVPFNGFRMDFEIDFNHPAIESDEQRLLFDFSSQGFVREISRARTFGFMRDIEYLQSQNLVLGGSFDNAIVLDDYRILNEEGLRFENEFVTHKVLDAIGDLYMCGHPIIGEFRAYKSGHGLNNQLLRAVLADQEAWEWTTFEEEVGSPVAFAEPNMVLA</sequence>
<comment type="function">
    <text evidence="1">Catalyzes the hydrolysis of UDP-3-O-myristoyl-N-acetylglucosamine to form UDP-3-O-myristoylglucosamine and acetate, the committed step in lipid A biosynthesis.</text>
</comment>
<comment type="catalytic activity">
    <reaction evidence="1">
        <text>a UDP-3-O-[(3R)-3-hydroxyacyl]-N-acetyl-alpha-D-glucosamine + H2O = a UDP-3-O-[(3R)-3-hydroxyacyl]-alpha-D-glucosamine + acetate</text>
        <dbReference type="Rhea" id="RHEA:67816"/>
        <dbReference type="ChEBI" id="CHEBI:15377"/>
        <dbReference type="ChEBI" id="CHEBI:30089"/>
        <dbReference type="ChEBI" id="CHEBI:137740"/>
        <dbReference type="ChEBI" id="CHEBI:173225"/>
        <dbReference type="EC" id="3.5.1.108"/>
    </reaction>
</comment>
<comment type="cofactor">
    <cofactor evidence="1">
        <name>Zn(2+)</name>
        <dbReference type="ChEBI" id="CHEBI:29105"/>
    </cofactor>
</comment>
<comment type="pathway">
    <text evidence="1">Glycolipid biosynthesis; lipid IV(A) biosynthesis; lipid IV(A) from (3R)-3-hydroxytetradecanoyl-[acyl-carrier-protein] and UDP-N-acetyl-alpha-D-glucosamine: step 2/6.</text>
</comment>
<comment type="similarity">
    <text evidence="1">Belongs to the LpxC family.</text>
</comment>
<organism>
    <name type="scientific">Vibrio parahaemolyticus serotype O3:K6 (strain RIMD 2210633)</name>
    <dbReference type="NCBI Taxonomy" id="223926"/>
    <lineage>
        <taxon>Bacteria</taxon>
        <taxon>Pseudomonadati</taxon>
        <taxon>Pseudomonadota</taxon>
        <taxon>Gammaproteobacteria</taxon>
        <taxon>Vibrionales</taxon>
        <taxon>Vibrionaceae</taxon>
        <taxon>Vibrio</taxon>
    </lineage>
</organism>
<name>LPXC_VIBPA</name>
<keyword id="KW-0378">Hydrolase</keyword>
<keyword id="KW-0441">Lipid A biosynthesis</keyword>
<keyword id="KW-0444">Lipid biosynthesis</keyword>
<keyword id="KW-0443">Lipid metabolism</keyword>
<keyword id="KW-0479">Metal-binding</keyword>
<keyword id="KW-0862">Zinc</keyword>
<feature type="chain" id="PRO_0000191963" description="UDP-3-O-acyl-N-acetylglucosamine deacetylase">
    <location>
        <begin position="1"/>
        <end position="305"/>
    </location>
</feature>
<feature type="active site" description="Proton donor" evidence="1">
    <location>
        <position position="265"/>
    </location>
</feature>
<feature type="binding site" evidence="1">
    <location>
        <position position="79"/>
    </location>
    <ligand>
        <name>Zn(2+)</name>
        <dbReference type="ChEBI" id="CHEBI:29105"/>
    </ligand>
</feature>
<feature type="binding site" evidence="1">
    <location>
        <position position="238"/>
    </location>
    <ligand>
        <name>Zn(2+)</name>
        <dbReference type="ChEBI" id="CHEBI:29105"/>
    </ligand>
</feature>
<feature type="binding site" evidence="1">
    <location>
        <position position="242"/>
    </location>
    <ligand>
        <name>Zn(2+)</name>
        <dbReference type="ChEBI" id="CHEBI:29105"/>
    </ligand>
</feature>
<accession>Q87SF9</accession>
<dbReference type="EC" id="3.5.1.108" evidence="1"/>
<dbReference type="EMBL" id="BA000031">
    <property type="protein sequence ID" value="BAC58728.1"/>
    <property type="molecule type" value="Genomic_DNA"/>
</dbReference>
<dbReference type="RefSeq" id="NP_796844.1">
    <property type="nucleotide sequence ID" value="NC_004603.1"/>
</dbReference>
<dbReference type="RefSeq" id="WP_005461213.1">
    <property type="nucleotide sequence ID" value="NC_004603.1"/>
</dbReference>
<dbReference type="SMR" id="Q87SF9"/>
<dbReference type="GeneID" id="1187933"/>
<dbReference type="KEGG" id="vpa:VP0465"/>
<dbReference type="PATRIC" id="fig|223926.6.peg.443"/>
<dbReference type="eggNOG" id="COG0774">
    <property type="taxonomic scope" value="Bacteria"/>
</dbReference>
<dbReference type="HOGENOM" id="CLU_046528_1_0_6"/>
<dbReference type="UniPathway" id="UPA00359">
    <property type="reaction ID" value="UER00478"/>
</dbReference>
<dbReference type="Proteomes" id="UP000002493">
    <property type="component" value="Chromosome 1"/>
</dbReference>
<dbReference type="GO" id="GO:0016020">
    <property type="term" value="C:membrane"/>
    <property type="evidence" value="ECO:0007669"/>
    <property type="project" value="GOC"/>
</dbReference>
<dbReference type="GO" id="GO:0046872">
    <property type="term" value="F:metal ion binding"/>
    <property type="evidence" value="ECO:0007669"/>
    <property type="project" value="UniProtKB-KW"/>
</dbReference>
<dbReference type="GO" id="GO:0103117">
    <property type="term" value="F:UDP-3-O-acyl-N-acetylglucosamine deacetylase activity"/>
    <property type="evidence" value="ECO:0007669"/>
    <property type="project" value="UniProtKB-UniRule"/>
</dbReference>
<dbReference type="GO" id="GO:0009245">
    <property type="term" value="P:lipid A biosynthetic process"/>
    <property type="evidence" value="ECO:0007669"/>
    <property type="project" value="UniProtKB-UniRule"/>
</dbReference>
<dbReference type="FunFam" id="3.30.1700.10:FF:000001">
    <property type="entry name" value="UDP-3-O-acyl-N-acetylglucosamine deacetylase"/>
    <property type="match status" value="1"/>
</dbReference>
<dbReference type="FunFam" id="3.30.230.20:FF:000001">
    <property type="entry name" value="UDP-3-O-acyl-N-acetylglucosamine deacetylase"/>
    <property type="match status" value="1"/>
</dbReference>
<dbReference type="Gene3D" id="3.30.230.20">
    <property type="entry name" value="lpxc deacetylase, domain 1"/>
    <property type="match status" value="1"/>
</dbReference>
<dbReference type="Gene3D" id="3.30.1700.10">
    <property type="entry name" value="lpxc deacetylase, domain 2"/>
    <property type="match status" value="1"/>
</dbReference>
<dbReference type="HAMAP" id="MF_00388">
    <property type="entry name" value="LpxC"/>
    <property type="match status" value="1"/>
</dbReference>
<dbReference type="InterPro" id="IPR020568">
    <property type="entry name" value="Ribosomal_Su5_D2-typ_SF"/>
</dbReference>
<dbReference type="InterPro" id="IPR004463">
    <property type="entry name" value="UDP-acyl_GlcNac_deAcase"/>
</dbReference>
<dbReference type="InterPro" id="IPR011334">
    <property type="entry name" value="UDP-acyl_GlcNac_deAcase_C"/>
</dbReference>
<dbReference type="InterPro" id="IPR015870">
    <property type="entry name" value="UDP-acyl_N-AcGlcN_deAcase_N"/>
</dbReference>
<dbReference type="NCBIfam" id="TIGR00325">
    <property type="entry name" value="lpxC"/>
    <property type="match status" value="1"/>
</dbReference>
<dbReference type="PANTHER" id="PTHR33694">
    <property type="entry name" value="UDP-3-O-ACYL-N-ACETYLGLUCOSAMINE DEACETYLASE 1, MITOCHONDRIAL-RELATED"/>
    <property type="match status" value="1"/>
</dbReference>
<dbReference type="PANTHER" id="PTHR33694:SF1">
    <property type="entry name" value="UDP-3-O-ACYL-N-ACETYLGLUCOSAMINE DEACETYLASE 1, MITOCHONDRIAL-RELATED"/>
    <property type="match status" value="1"/>
</dbReference>
<dbReference type="Pfam" id="PF03331">
    <property type="entry name" value="LpxC"/>
    <property type="match status" value="1"/>
</dbReference>
<dbReference type="SUPFAM" id="SSF54211">
    <property type="entry name" value="Ribosomal protein S5 domain 2-like"/>
    <property type="match status" value="2"/>
</dbReference>
<gene>
    <name evidence="1" type="primary">lpxC</name>
    <name type="ordered locus">VP0465</name>
</gene>
<reference key="1">
    <citation type="journal article" date="2003" name="Lancet">
        <title>Genome sequence of Vibrio parahaemolyticus: a pathogenic mechanism distinct from that of V. cholerae.</title>
        <authorList>
            <person name="Makino K."/>
            <person name="Oshima K."/>
            <person name="Kurokawa K."/>
            <person name="Yokoyama K."/>
            <person name="Uda T."/>
            <person name="Tagomori K."/>
            <person name="Iijima Y."/>
            <person name="Najima M."/>
            <person name="Nakano M."/>
            <person name="Yamashita A."/>
            <person name="Kubota Y."/>
            <person name="Kimura S."/>
            <person name="Yasunaga T."/>
            <person name="Honda T."/>
            <person name="Shinagawa H."/>
            <person name="Hattori M."/>
            <person name="Iida T."/>
        </authorList>
    </citation>
    <scope>NUCLEOTIDE SEQUENCE [LARGE SCALE GENOMIC DNA]</scope>
    <source>
        <strain>RIMD 2210633</strain>
    </source>
</reference>
<evidence type="ECO:0000255" key="1">
    <source>
        <dbReference type="HAMAP-Rule" id="MF_00388"/>
    </source>
</evidence>